<accession>Q4WTV7</accession>
<gene>
    <name type="primary">ino80</name>
    <name type="ORF">AFUA_5G06260</name>
</gene>
<proteinExistence type="inferred from homology"/>
<feature type="chain" id="PRO_0000074319" description="Chromatin-remodeling ATPase INO80">
    <location>
        <begin position="1"/>
        <end position="1708"/>
    </location>
</feature>
<feature type="domain" description="DBINO" evidence="6">
    <location>
        <begin position="592"/>
        <end position="717"/>
    </location>
</feature>
<feature type="domain" description="Helicase ATP-binding" evidence="4">
    <location>
        <begin position="845"/>
        <end position="1017"/>
    </location>
</feature>
<feature type="domain" description="Helicase C-terminal" evidence="5">
    <location>
        <begin position="1422"/>
        <end position="1582"/>
    </location>
</feature>
<feature type="region of interest" description="Disordered" evidence="7">
    <location>
        <begin position="1"/>
        <end position="312"/>
    </location>
</feature>
<feature type="region of interest" description="Disordered" evidence="7">
    <location>
        <begin position="408"/>
        <end position="581"/>
    </location>
</feature>
<feature type="region of interest" description="Disordered" evidence="7">
    <location>
        <begin position="626"/>
        <end position="648"/>
    </location>
</feature>
<feature type="region of interest" description="Disordered" evidence="7">
    <location>
        <begin position="718"/>
        <end position="747"/>
    </location>
</feature>
<feature type="region of interest" description="Disordered" evidence="7">
    <location>
        <begin position="1643"/>
        <end position="1708"/>
    </location>
</feature>
<feature type="coiled-coil region" evidence="3">
    <location>
        <begin position="395"/>
        <end position="478"/>
    </location>
</feature>
<feature type="coiled-coil region" evidence="3">
    <location>
        <begin position="634"/>
        <end position="706"/>
    </location>
</feature>
<feature type="short sequence motif" description="DEAQ box">
    <location>
        <begin position="968"/>
        <end position="971"/>
    </location>
</feature>
<feature type="compositionally biased region" description="Polar residues" evidence="7">
    <location>
        <begin position="24"/>
        <end position="37"/>
    </location>
</feature>
<feature type="compositionally biased region" description="Polar residues" evidence="7">
    <location>
        <begin position="88"/>
        <end position="102"/>
    </location>
</feature>
<feature type="compositionally biased region" description="Low complexity" evidence="7">
    <location>
        <begin position="108"/>
        <end position="122"/>
    </location>
</feature>
<feature type="compositionally biased region" description="Low complexity" evidence="7">
    <location>
        <begin position="211"/>
        <end position="220"/>
    </location>
</feature>
<feature type="compositionally biased region" description="Basic and acidic residues" evidence="7">
    <location>
        <begin position="265"/>
        <end position="285"/>
    </location>
</feature>
<feature type="compositionally biased region" description="Basic and acidic residues" evidence="7">
    <location>
        <begin position="408"/>
        <end position="417"/>
    </location>
</feature>
<feature type="compositionally biased region" description="Basic and acidic residues" evidence="7">
    <location>
        <begin position="426"/>
        <end position="463"/>
    </location>
</feature>
<feature type="compositionally biased region" description="Basic residues" evidence="7">
    <location>
        <begin position="507"/>
        <end position="522"/>
    </location>
</feature>
<feature type="compositionally biased region" description="Basic and acidic residues" evidence="7">
    <location>
        <begin position="523"/>
        <end position="534"/>
    </location>
</feature>
<feature type="compositionally biased region" description="Basic and acidic residues" evidence="7">
    <location>
        <begin position="551"/>
        <end position="571"/>
    </location>
</feature>
<feature type="compositionally biased region" description="Basic and acidic residues" evidence="7">
    <location>
        <begin position="632"/>
        <end position="646"/>
    </location>
</feature>
<feature type="compositionally biased region" description="Polar residues" evidence="7">
    <location>
        <begin position="1658"/>
        <end position="1672"/>
    </location>
</feature>
<feature type="compositionally biased region" description="Basic residues" evidence="7">
    <location>
        <begin position="1675"/>
        <end position="1691"/>
    </location>
</feature>
<feature type="compositionally biased region" description="Basic and acidic residues" evidence="7">
    <location>
        <begin position="1692"/>
        <end position="1701"/>
    </location>
</feature>
<feature type="binding site" evidence="4">
    <location>
        <begin position="858"/>
        <end position="865"/>
    </location>
    <ligand>
        <name>ATP</name>
        <dbReference type="ChEBI" id="CHEBI:30616"/>
    </ligand>
</feature>
<sequence>MTGAPPYNPQSPTQQPRFPVYSPPNKNRSYYPNNDQYQQHAPQTPPAFAPQPSLSRSPHYSHAPSPLPATLPPLNGGAPPPGHHPEPSSQYQTHSSAGTPQFSLPRPYSASMMSSNGASSYNHSTASHAHPSARLESLSQSPPKKETEPLYPIGGNGAPGYSSSMMREPRPASPPRETKHARAADPMSFASILSGPTEETSPIKQPSLPEALPGPATTITPAPPTLAPVPARRRLTPPPVTHALPPTSQLKVKEPEPISPAALPRLEKKPSAEKRRRNVEQEPKSAEALPVASTHGAFEPTKAARVSNRKTLTERDAEAINKIIAEIDNADKSDVESPGFEVEYGRYMVKSKKRALDAEKAEGIRRKRRRHDFLVKLGKTFEKQANAGVDRFRAANEASVIAEVQAKEIQDEKERKKDMQRKRRRENTVRLEMQKKLEAERKANKANDAAEKAKFLREAERAQRKIKSTKRALEGVTSPEEIGEVTPLAPNLEGGTTSSFHIGRSSPSRRKSGRSGTSRPKKSKEQKQAEKDAAEAAYAAMENDEPLPLAPKEDPRKETVKKEAKGARSKETTPAPVSAFESKGYNQIYEQIWRDIARKDIPKVYRIKTLSLSTRQENLRKTAQLASKQSRKWQERTNKSMKDTQARAKRTMREMMSFWKRNEREERDLRRLAEKQEIESAKKAEAEREANRQKRKLNFLISQTELYSHFIGRKIKGAGADSSGDTAVDGSDETIQPGKADHTIDLPPTVADVGAKVTNFEDLDFDAEDETALRQAALANAQNAVKEAQERARAFNAEENPMAALDEGELNFQNPTSLGDIEISQPKMLTAKLKEYQLKGLNWLVNLYEQGINGILADEMGLGKTIQSISVMAYLAEVHNIWGPFLVIAPASTLHNWQQEITKFVPDIKVLPYWGSAKDRKVLRKFWDRKHITYTKESEFHVLVTSYQLVVLDSQYFQKVKWQYMILDEAQAIKSSQSSRWKNLLGFHCRNRLLLTGTPIQNNMQELWALLHFIMPTLFDSHDEFSEWFSKDIESHAQSNTKLNEDQLRRLHMILKPFMLRRVKKHVQQELGDKVEKDVFCDLTYRQRAYYTNLRNRVSIMDLIEKAAVGDEADSTTLMNLVMQFRKVCNHPDLFERAETKSPFSVGYFAETASFVREGQNVDVRYSTRNLIEYNLPRLLCSPSGRIDMAGPGNEHAGFRGKYLQHLMNIFTPENIKRSIDEDGAFSFLRFADTSINEAYEQSHLGVFERAVRRRGQSNRLSHLNVIYDDEEDEKTSKFVLPHSLFNIVQRNDRQAVRNVTVEGYMRDLMNVSEATFERDGLGVIEPSASPAASAPPITISCSGQVALRETQDTFFNVSVRHALFSTPSRQMEQQILEKKLDPAPFSLPPMLPKPISTKGRYTHIEVPSMRRFVTDSGKLAKLDELLRELKAGGHRVLLYFQMTRMIDLMEEYLTYRNYKYCRLDGSTKLEDRRDTVADFQQRPEIFVFLLSTRAGGLGINLTAADTVIFYDSDWNPTIDSQAMDRAHRLGQTRQVTVYRLITRGTIEERIRKRALQKEEVQRVVISGGAAGGVDFNTRNRESRTKDIAMWLADDEQAELIEQKEKEALDRGEVFGAGKGGKKAAQKRKKDLTLDDMYHEGEGNFDDISAKPSGAATPVSTADNFGTPSSTPVPKRGRGRGNGKGSSKRAKTTTERLRLIDGDGGLES</sequence>
<name>INO80_ASPFU</name>
<keyword id="KW-0010">Activator</keyword>
<keyword id="KW-0067">ATP-binding</keyword>
<keyword id="KW-0175">Coiled coil</keyword>
<keyword id="KW-0227">DNA damage</keyword>
<keyword id="KW-0234">DNA repair</keyword>
<keyword id="KW-0238">DNA-binding</keyword>
<keyword id="KW-0378">Hydrolase</keyword>
<keyword id="KW-0547">Nucleotide-binding</keyword>
<keyword id="KW-0539">Nucleus</keyword>
<keyword id="KW-1185">Reference proteome</keyword>
<keyword id="KW-0804">Transcription</keyword>
<keyword id="KW-0805">Transcription regulation</keyword>
<dbReference type="EC" id="3.6.4.-" evidence="1"/>
<dbReference type="EMBL" id="AAHF01000003">
    <property type="protein sequence ID" value="EAL91969.1"/>
    <property type="molecule type" value="Genomic_DNA"/>
</dbReference>
<dbReference type="RefSeq" id="XP_754007.1">
    <property type="nucleotide sequence ID" value="XM_748914.1"/>
</dbReference>
<dbReference type="SMR" id="Q4WTV7"/>
<dbReference type="FunCoup" id="Q4WTV7">
    <property type="interactions" value="1078"/>
</dbReference>
<dbReference type="STRING" id="330879.Q4WTV7"/>
<dbReference type="EnsemblFungi" id="EAL91969">
    <property type="protein sequence ID" value="EAL91969"/>
    <property type="gene ID" value="AFUA_5G06260"/>
</dbReference>
<dbReference type="GeneID" id="3511543"/>
<dbReference type="KEGG" id="afm:AFUA_5G06260"/>
<dbReference type="VEuPathDB" id="FungiDB:Afu5g06260"/>
<dbReference type="eggNOG" id="KOG0388">
    <property type="taxonomic scope" value="Eukaryota"/>
</dbReference>
<dbReference type="HOGENOM" id="CLU_000315_26_0_1"/>
<dbReference type="InParanoid" id="Q4WTV7"/>
<dbReference type="OMA" id="NLLGFHC"/>
<dbReference type="OrthoDB" id="372624at2759"/>
<dbReference type="Proteomes" id="UP000002530">
    <property type="component" value="Chromosome 5"/>
</dbReference>
<dbReference type="GO" id="GO:0000775">
    <property type="term" value="C:chromosome, centromeric region"/>
    <property type="evidence" value="ECO:0007669"/>
    <property type="project" value="EnsemblFungi"/>
</dbReference>
<dbReference type="GO" id="GO:0000781">
    <property type="term" value="C:chromosome, telomeric region"/>
    <property type="evidence" value="ECO:0007669"/>
    <property type="project" value="GOC"/>
</dbReference>
<dbReference type="GO" id="GO:0031011">
    <property type="term" value="C:Ino80 complex"/>
    <property type="evidence" value="ECO:0000318"/>
    <property type="project" value="GO_Central"/>
</dbReference>
<dbReference type="GO" id="GO:0005524">
    <property type="term" value="F:ATP binding"/>
    <property type="evidence" value="ECO:0007669"/>
    <property type="project" value="UniProtKB-KW"/>
</dbReference>
<dbReference type="GO" id="GO:0016887">
    <property type="term" value="F:ATP hydrolysis activity"/>
    <property type="evidence" value="ECO:0000318"/>
    <property type="project" value="GO_Central"/>
</dbReference>
<dbReference type="GO" id="GO:0140658">
    <property type="term" value="F:ATP-dependent chromatin remodeler activity"/>
    <property type="evidence" value="ECO:0007669"/>
    <property type="project" value="InterPro"/>
</dbReference>
<dbReference type="GO" id="GO:0003677">
    <property type="term" value="F:DNA binding"/>
    <property type="evidence" value="ECO:0007669"/>
    <property type="project" value="UniProtKB-KW"/>
</dbReference>
<dbReference type="GO" id="GO:0042393">
    <property type="term" value="F:histone binding"/>
    <property type="evidence" value="ECO:0000318"/>
    <property type="project" value="GO_Central"/>
</dbReference>
<dbReference type="GO" id="GO:0034080">
    <property type="term" value="P:CENP-A containing chromatin assembly"/>
    <property type="evidence" value="ECO:0007669"/>
    <property type="project" value="EnsemblFungi"/>
</dbReference>
<dbReference type="GO" id="GO:0006338">
    <property type="term" value="P:chromatin remodeling"/>
    <property type="evidence" value="ECO:0000318"/>
    <property type="project" value="GO_Central"/>
</dbReference>
<dbReference type="GO" id="GO:0006281">
    <property type="term" value="P:DNA repair"/>
    <property type="evidence" value="ECO:0000318"/>
    <property type="project" value="GO_Central"/>
</dbReference>
<dbReference type="GO" id="GO:0045944">
    <property type="term" value="P:positive regulation of transcription by RNA polymerase II"/>
    <property type="evidence" value="ECO:0007669"/>
    <property type="project" value="EnsemblFungi"/>
</dbReference>
<dbReference type="GO" id="GO:0032006">
    <property type="term" value="P:regulation of TOR signaling"/>
    <property type="evidence" value="ECO:0007669"/>
    <property type="project" value="EnsemblFungi"/>
</dbReference>
<dbReference type="GO" id="GO:0031509">
    <property type="term" value="P:subtelomeric heterochromatin formation"/>
    <property type="evidence" value="ECO:0007669"/>
    <property type="project" value="EnsemblFungi"/>
</dbReference>
<dbReference type="GO" id="GO:0000722">
    <property type="term" value="P:telomere maintenance via recombination"/>
    <property type="evidence" value="ECO:0007669"/>
    <property type="project" value="EnsemblFungi"/>
</dbReference>
<dbReference type="GO" id="GO:0006366">
    <property type="term" value="P:transcription by RNA polymerase II"/>
    <property type="evidence" value="ECO:0007669"/>
    <property type="project" value="EnsemblFungi"/>
</dbReference>
<dbReference type="CDD" id="cd18002">
    <property type="entry name" value="DEXQc_INO80"/>
    <property type="match status" value="1"/>
</dbReference>
<dbReference type="CDD" id="cd18793">
    <property type="entry name" value="SF2_C_SNF"/>
    <property type="match status" value="1"/>
</dbReference>
<dbReference type="FunFam" id="3.40.50.10810:FF:000006">
    <property type="entry name" value="Putative DNA helicase INO80"/>
    <property type="match status" value="1"/>
</dbReference>
<dbReference type="FunFam" id="3.40.50.300:FF:001269">
    <property type="entry name" value="SNF2 family helicase/ATPase"/>
    <property type="match status" value="1"/>
</dbReference>
<dbReference type="Gene3D" id="3.40.50.300">
    <property type="entry name" value="P-loop containing nucleotide triphosphate hydrolases"/>
    <property type="match status" value="1"/>
</dbReference>
<dbReference type="Gene3D" id="3.40.50.10810">
    <property type="entry name" value="Tandem AAA-ATPase domain"/>
    <property type="match status" value="1"/>
</dbReference>
<dbReference type="InterPro" id="IPR020838">
    <property type="entry name" value="DBINO"/>
</dbReference>
<dbReference type="InterPro" id="IPR031047">
    <property type="entry name" value="DEXQc_INO80"/>
</dbReference>
<dbReference type="InterPro" id="IPR014001">
    <property type="entry name" value="Helicase_ATP-bd"/>
</dbReference>
<dbReference type="InterPro" id="IPR001650">
    <property type="entry name" value="Helicase_C-like"/>
</dbReference>
<dbReference type="InterPro" id="IPR050520">
    <property type="entry name" value="INO80/SWR1_helicase"/>
</dbReference>
<dbReference type="InterPro" id="IPR027417">
    <property type="entry name" value="P-loop_NTPase"/>
</dbReference>
<dbReference type="InterPro" id="IPR038718">
    <property type="entry name" value="SNF2-like_sf"/>
</dbReference>
<dbReference type="InterPro" id="IPR049730">
    <property type="entry name" value="SNF2/RAD54-like_C"/>
</dbReference>
<dbReference type="InterPro" id="IPR000330">
    <property type="entry name" value="SNF2_N"/>
</dbReference>
<dbReference type="PANTHER" id="PTHR45685:SF2">
    <property type="entry name" value="CHROMATIN-REMODELING ATPASE INO80"/>
    <property type="match status" value="1"/>
</dbReference>
<dbReference type="PANTHER" id="PTHR45685">
    <property type="entry name" value="HELICASE SRCAP-RELATED"/>
    <property type="match status" value="1"/>
</dbReference>
<dbReference type="Pfam" id="PF13892">
    <property type="entry name" value="DBINO"/>
    <property type="match status" value="1"/>
</dbReference>
<dbReference type="Pfam" id="PF00271">
    <property type="entry name" value="Helicase_C"/>
    <property type="match status" value="1"/>
</dbReference>
<dbReference type="Pfam" id="PF00176">
    <property type="entry name" value="SNF2-rel_dom"/>
    <property type="match status" value="1"/>
</dbReference>
<dbReference type="SMART" id="SM00487">
    <property type="entry name" value="DEXDc"/>
    <property type="match status" value="1"/>
</dbReference>
<dbReference type="SMART" id="SM00490">
    <property type="entry name" value="HELICc"/>
    <property type="match status" value="1"/>
</dbReference>
<dbReference type="SUPFAM" id="SSF52540">
    <property type="entry name" value="P-loop containing nucleoside triphosphate hydrolases"/>
    <property type="match status" value="2"/>
</dbReference>
<dbReference type="PROSITE" id="PS51413">
    <property type="entry name" value="DBINO"/>
    <property type="match status" value="1"/>
</dbReference>
<dbReference type="PROSITE" id="PS51192">
    <property type="entry name" value="HELICASE_ATP_BIND_1"/>
    <property type="match status" value="1"/>
</dbReference>
<dbReference type="PROSITE" id="PS51194">
    <property type="entry name" value="HELICASE_CTER"/>
    <property type="match status" value="1"/>
</dbReference>
<protein>
    <recommendedName>
        <fullName evidence="1">Chromatin-remodeling ATPase INO80</fullName>
        <ecNumber evidence="1">3.6.4.-</ecNumber>
    </recommendedName>
</protein>
<evidence type="ECO:0000250" key="1">
    <source>
        <dbReference type="UniProtKB" id="P53115"/>
    </source>
</evidence>
<evidence type="ECO:0000250" key="2">
    <source>
        <dbReference type="UniProtKB" id="Q9ULG1"/>
    </source>
</evidence>
<evidence type="ECO:0000255" key="3"/>
<evidence type="ECO:0000255" key="4">
    <source>
        <dbReference type="PROSITE-ProRule" id="PRU00541"/>
    </source>
</evidence>
<evidence type="ECO:0000255" key="5">
    <source>
        <dbReference type="PROSITE-ProRule" id="PRU00542"/>
    </source>
</evidence>
<evidence type="ECO:0000255" key="6">
    <source>
        <dbReference type="PROSITE-ProRule" id="PRU00746"/>
    </source>
</evidence>
<evidence type="ECO:0000256" key="7">
    <source>
        <dbReference type="SAM" id="MobiDB-lite"/>
    </source>
</evidence>
<evidence type="ECO:0000305" key="8"/>
<comment type="function">
    <text evidence="6">ATPase component of the INO80 complex which remodels chromatin by shifting nucleosomes and is involved in DNA repair.</text>
</comment>
<comment type="catalytic activity">
    <reaction evidence="1">
        <text>ATP + H2O = ADP + phosphate + H(+)</text>
        <dbReference type="Rhea" id="RHEA:13065"/>
        <dbReference type="ChEBI" id="CHEBI:15377"/>
        <dbReference type="ChEBI" id="CHEBI:15378"/>
        <dbReference type="ChEBI" id="CHEBI:30616"/>
        <dbReference type="ChEBI" id="CHEBI:43474"/>
        <dbReference type="ChEBI" id="CHEBI:456216"/>
    </reaction>
</comment>
<comment type="subunit">
    <text evidence="6">Component of the INO80 chromatin-remodeling complex.</text>
</comment>
<comment type="subcellular location">
    <subcellularLocation>
        <location evidence="6">Nucleus</location>
    </subcellularLocation>
</comment>
<comment type="domain">
    <text evidence="2">The DBINO region is involved in binding to DNA.</text>
</comment>
<comment type="similarity">
    <text evidence="8">Belongs to the SNF2/RAD54 helicase family.</text>
</comment>
<reference key="1">
    <citation type="journal article" date="2005" name="Nature">
        <title>Genomic sequence of the pathogenic and allergenic filamentous fungus Aspergillus fumigatus.</title>
        <authorList>
            <person name="Nierman W.C."/>
            <person name="Pain A."/>
            <person name="Anderson M.J."/>
            <person name="Wortman J.R."/>
            <person name="Kim H.S."/>
            <person name="Arroyo J."/>
            <person name="Berriman M."/>
            <person name="Abe K."/>
            <person name="Archer D.B."/>
            <person name="Bermejo C."/>
            <person name="Bennett J.W."/>
            <person name="Bowyer P."/>
            <person name="Chen D."/>
            <person name="Collins M."/>
            <person name="Coulsen R."/>
            <person name="Davies R."/>
            <person name="Dyer P.S."/>
            <person name="Farman M.L."/>
            <person name="Fedorova N."/>
            <person name="Fedorova N.D."/>
            <person name="Feldblyum T.V."/>
            <person name="Fischer R."/>
            <person name="Fosker N."/>
            <person name="Fraser A."/>
            <person name="Garcia J.L."/>
            <person name="Garcia M.J."/>
            <person name="Goble A."/>
            <person name="Goldman G.H."/>
            <person name="Gomi K."/>
            <person name="Griffith-Jones S."/>
            <person name="Gwilliam R."/>
            <person name="Haas B.J."/>
            <person name="Haas H."/>
            <person name="Harris D.E."/>
            <person name="Horiuchi H."/>
            <person name="Huang J."/>
            <person name="Humphray S."/>
            <person name="Jimenez J."/>
            <person name="Keller N."/>
            <person name="Khouri H."/>
            <person name="Kitamoto K."/>
            <person name="Kobayashi T."/>
            <person name="Konzack S."/>
            <person name="Kulkarni R."/>
            <person name="Kumagai T."/>
            <person name="Lafton A."/>
            <person name="Latge J.-P."/>
            <person name="Li W."/>
            <person name="Lord A."/>
            <person name="Lu C."/>
            <person name="Majoros W.H."/>
            <person name="May G.S."/>
            <person name="Miller B.L."/>
            <person name="Mohamoud Y."/>
            <person name="Molina M."/>
            <person name="Monod M."/>
            <person name="Mouyna I."/>
            <person name="Mulligan S."/>
            <person name="Murphy L.D."/>
            <person name="O'Neil S."/>
            <person name="Paulsen I."/>
            <person name="Penalva M.A."/>
            <person name="Pertea M."/>
            <person name="Price C."/>
            <person name="Pritchard B.L."/>
            <person name="Quail M.A."/>
            <person name="Rabbinowitsch E."/>
            <person name="Rawlins N."/>
            <person name="Rajandream M.A."/>
            <person name="Reichard U."/>
            <person name="Renauld H."/>
            <person name="Robson G.D."/>
            <person name="Rodriguez de Cordoba S."/>
            <person name="Rodriguez-Pena J.M."/>
            <person name="Ronning C.M."/>
            <person name="Rutter S."/>
            <person name="Salzberg S.L."/>
            <person name="Sanchez M."/>
            <person name="Sanchez-Ferrero J.C."/>
            <person name="Saunders D."/>
            <person name="Seeger K."/>
            <person name="Squares R."/>
            <person name="Squares S."/>
            <person name="Takeuchi M."/>
            <person name="Tekaia F."/>
            <person name="Turner G."/>
            <person name="Vazquez de Aldana C.R."/>
            <person name="Weidman J."/>
            <person name="White O."/>
            <person name="Woodward J.R."/>
            <person name="Yu J.-H."/>
            <person name="Fraser C.M."/>
            <person name="Galagan J.E."/>
            <person name="Asai K."/>
            <person name="Machida M."/>
            <person name="Hall N."/>
            <person name="Barrell B.G."/>
            <person name="Denning D.W."/>
        </authorList>
    </citation>
    <scope>NUCLEOTIDE SEQUENCE [LARGE SCALE GENOMIC DNA]</scope>
    <source>
        <strain>ATCC MYA-4609 / CBS 101355 / FGSC A1100 / Af293</strain>
    </source>
</reference>
<organism>
    <name type="scientific">Aspergillus fumigatus (strain ATCC MYA-4609 / CBS 101355 / FGSC A1100 / Af293)</name>
    <name type="common">Neosartorya fumigata</name>
    <dbReference type="NCBI Taxonomy" id="330879"/>
    <lineage>
        <taxon>Eukaryota</taxon>
        <taxon>Fungi</taxon>
        <taxon>Dikarya</taxon>
        <taxon>Ascomycota</taxon>
        <taxon>Pezizomycotina</taxon>
        <taxon>Eurotiomycetes</taxon>
        <taxon>Eurotiomycetidae</taxon>
        <taxon>Eurotiales</taxon>
        <taxon>Aspergillaceae</taxon>
        <taxon>Aspergillus</taxon>
        <taxon>Aspergillus subgen. Fumigati</taxon>
    </lineage>
</organism>